<dbReference type="EC" id="4.2.1.11" evidence="1"/>
<dbReference type="EMBL" id="AE002160">
    <property type="protein sequence ID" value="AAF39672.1"/>
    <property type="molecule type" value="Genomic_DNA"/>
</dbReference>
<dbReference type="PIR" id="E81654">
    <property type="entry name" value="E81654"/>
</dbReference>
<dbReference type="RefSeq" id="WP_010231826.1">
    <property type="nucleotide sequence ID" value="NZ_CP063055.1"/>
</dbReference>
<dbReference type="SMR" id="Q9PJF3"/>
<dbReference type="GeneID" id="1246244"/>
<dbReference type="KEGG" id="cmu:TC_0876"/>
<dbReference type="eggNOG" id="COG0148">
    <property type="taxonomic scope" value="Bacteria"/>
</dbReference>
<dbReference type="HOGENOM" id="CLU_031223_2_1_0"/>
<dbReference type="OrthoDB" id="9804716at2"/>
<dbReference type="UniPathway" id="UPA00109">
    <property type="reaction ID" value="UER00187"/>
</dbReference>
<dbReference type="Proteomes" id="UP000000800">
    <property type="component" value="Chromosome"/>
</dbReference>
<dbReference type="GO" id="GO:0009986">
    <property type="term" value="C:cell surface"/>
    <property type="evidence" value="ECO:0007669"/>
    <property type="project" value="UniProtKB-SubCell"/>
</dbReference>
<dbReference type="GO" id="GO:0005576">
    <property type="term" value="C:extracellular region"/>
    <property type="evidence" value="ECO:0007669"/>
    <property type="project" value="UniProtKB-SubCell"/>
</dbReference>
<dbReference type="GO" id="GO:0000015">
    <property type="term" value="C:phosphopyruvate hydratase complex"/>
    <property type="evidence" value="ECO:0007669"/>
    <property type="project" value="InterPro"/>
</dbReference>
<dbReference type="GO" id="GO:0000287">
    <property type="term" value="F:magnesium ion binding"/>
    <property type="evidence" value="ECO:0007669"/>
    <property type="project" value="UniProtKB-UniRule"/>
</dbReference>
<dbReference type="GO" id="GO:0004634">
    <property type="term" value="F:phosphopyruvate hydratase activity"/>
    <property type="evidence" value="ECO:0007669"/>
    <property type="project" value="UniProtKB-UniRule"/>
</dbReference>
<dbReference type="GO" id="GO:0006096">
    <property type="term" value="P:glycolytic process"/>
    <property type="evidence" value="ECO:0007669"/>
    <property type="project" value="UniProtKB-UniRule"/>
</dbReference>
<dbReference type="CDD" id="cd03313">
    <property type="entry name" value="enolase"/>
    <property type="match status" value="1"/>
</dbReference>
<dbReference type="Gene3D" id="3.20.20.120">
    <property type="entry name" value="Enolase-like C-terminal domain"/>
    <property type="match status" value="1"/>
</dbReference>
<dbReference type="Gene3D" id="3.30.390.10">
    <property type="entry name" value="Enolase-like, N-terminal domain"/>
    <property type="match status" value="1"/>
</dbReference>
<dbReference type="HAMAP" id="MF_00318">
    <property type="entry name" value="Enolase"/>
    <property type="match status" value="1"/>
</dbReference>
<dbReference type="InterPro" id="IPR000941">
    <property type="entry name" value="Enolase"/>
</dbReference>
<dbReference type="InterPro" id="IPR036849">
    <property type="entry name" value="Enolase-like_C_sf"/>
</dbReference>
<dbReference type="InterPro" id="IPR029017">
    <property type="entry name" value="Enolase-like_N"/>
</dbReference>
<dbReference type="InterPro" id="IPR020810">
    <property type="entry name" value="Enolase_C"/>
</dbReference>
<dbReference type="InterPro" id="IPR020809">
    <property type="entry name" value="Enolase_CS"/>
</dbReference>
<dbReference type="InterPro" id="IPR020811">
    <property type="entry name" value="Enolase_N"/>
</dbReference>
<dbReference type="NCBIfam" id="TIGR01060">
    <property type="entry name" value="eno"/>
    <property type="match status" value="1"/>
</dbReference>
<dbReference type="PANTHER" id="PTHR11902">
    <property type="entry name" value="ENOLASE"/>
    <property type="match status" value="1"/>
</dbReference>
<dbReference type="PANTHER" id="PTHR11902:SF1">
    <property type="entry name" value="ENOLASE"/>
    <property type="match status" value="1"/>
</dbReference>
<dbReference type="Pfam" id="PF00113">
    <property type="entry name" value="Enolase_C"/>
    <property type="match status" value="1"/>
</dbReference>
<dbReference type="Pfam" id="PF03952">
    <property type="entry name" value="Enolase_N"/>
    <property type="match status" value="1"/>
</dbReference>
<dbReference type="PIRSF" id="PIRSF001400">
    <property type="entry name" value="Enolase"/>
    <property type="match status" value="1"/>
</dbReference>
<dbReference type="PRINTS" id="PR00148">
    <property type="entry name" value="ENOLASE"/>
</dbReference>
<dbReference type="SFLD" id="SFLDF00002">
    <property type="entry name" value="enolase"/>
    <property type="match status" value="1"/>
</dbReference>
<dbReference type="SFLD" id="SFLDG00178">
    <property type="entry name" value="enolase"/>
    <property type="match status" value="1"/>
</dbReference>
<dbReference type="SMART" id="SM01192">
    <property type="entry name" value="Enolase_C"/>
    <property type="match status" value="1"/>
</dbReference>
<dbReference type="SMART" id="SM01193">
    <property type="entry name" value="Enolase_N"/>
    <property type="match status" value="1"/>
</dbReference>
<dbReference type="SUPFAM" id="SSF51604">
    <property type="entry name" value="Enolase C-terminal domain-like"/>
    <property type="match status" value="1"/>
</dbReference>
<dbReference type="SUPFAM" id="SSF54826">
    <property type="entry name" value="Enolase N-terminal domain-like"/>
    <property type="match status" value="1"/>
</dbReference>
<dbReference type="PROSITE" id="PS00164">
    <property type="entry name" value="ENOLASE"/>
    <property type="match status" value="1"/>
</dbReference>
<feature type="chain" id="PRO_0000133866" description="Enolase">
    <location>
        <begin position="1"/>
        <end position="424"/>
    </location>
</feature>
<feature type="active site" description="Proton donor" evidence="1">
    <location>
        <position position="207"/>
    </location>
</feature>
<feature type="active site" description="Proton acceptor" evidence="1">
    <location>
        <position position="335"/>
    </location>
</feature>
<feature type="binding site" evidence="1">
    <location>
        <position position="165"/>
    </location>
    <ligand>
        <name>(2R)-2-phosphoglycerate</name>
        <dbReference type="ChEBI" id="CHEBI:58289"/>
    </ligand>
</feature>
<feature type="binding site" evidence="1">
    <location>
        <position position="244"/>
    </location>
    <ligand>
        <name>Mg(2+)</name>
        <dbReference type="ChEBI" id="CHEBI:18420"/>
    </ligand>
</feature>
<feature type="binding site" evidence="1">
    <location>
        <position position="283"/>
    </location>
    <ligand>
        <name>Mg(2+)</name>
        <dbReference type="ChEBI" id="CHEBI:18420"/>
    </ligand>
</feature>
<feature type="binding site" evidence="1">
    <location>
        <position position="310"/>
    </location>
    <ligand>
        <name>Mg(2+)</name>
        <dbReference type="ChEBI" id="CHEBI:18420"/>
    </ligand>
</feature>
<feature type="binding site" evidence="1">
    <location>
        <position position="335"/>
    </location>
    <ligand>
        <name>(2R)-2-phosphoglycerate</name>
        <dbReference type="ChEBI" id="CHEBI:58289"/>
    </ligand>
</feature>
<feature type="binding site" evidence="1">
    <location>
        <position position="364"/>
    </location>
    <ligand>
        <name>(2R)-2-phosphoglycerate</name>
        <dbReference type="ChEBI" id="CHEBI:58289"/>
    </ligand>
</feature>
<feature type="binding site" evidence="1">
    <location>
        <position position="365"/>
    </location>
    <ligand>
        <name>(2R)-2-phosphoglycerate</name>
        <dbReference type="ChEBI" id="CHEBI:58289"/>
    </ligand>
</feature>
<feature type="binding site" evidence="1">
    <location>
        <position position="386"/>
    </location>
    <ligand>
        <name>(2R)-2-phosphoglycerate</name>
        <dbReference type="ChEBI" id="CHEBI:58289"/>
    </ligand>
</feature>
<accession>Q9PJF3</accession>
<protein>
    <recommendedName>
        <fullName evidence="1">Enolase</fullName>
        <ecNumber evidence="1">4.2.1.11</ecNumber>
    </recommendedName>
    <alternativeName>
        <fullName evidence="1">2-phospho-D-glycerate hydro-lyase</fullName>
    </alternativeName>
    <alternativeName>
        <fullName evidence="1">2-phosphoglycerate dehydratase</fullName>
    </alternativeName>
</protein>
<proteinExistence type="inferred from homology"/>
<gene>
    <name evidence="1" type="primary">eno</name>
    <name type="ordered locus">TC_0876</name>
</gene>
<name>ENO_CHLMU</name>
<organism>
    <name type="scientific">Chlamydia muridarum (strain MoPn / Nigg)</name>
    <dbReference type="NCBI Taxonomy" id="243161"/>
    <lineage>
        <taxon>Bacteria</taxon>
        <taxon>Pseudomonadati</taxon>
        <taxon>Chlamydiota</taxon>
        <taxon>Chlamydiia</taxon>
        <taxon>Chlamydiales</taxon>
        <taxon>Chlamydiaceae</taxon>
        <taxon>Chlamydia/Chlamydophila group</taxon>
        <taxon>Chlamydia</taxon>
    </lineage>
</organism>
<keyword id="KW-0963">Cytoplasm</keyword>
<keyword id="KW-0324">Glycolysis</keyword>
<keyword id="KW-0456">Lyase</keyword>
<keyword id="KW-0460">Magnesium</keyword>
<keyword id="KW-0479">Metal-binding</keyword>
<keyword id="KW-0964">Secreted</keyword>
<reference key="1">
    <citation type="journal article" date="2000" name="Nucleic Acids Res.">
        <title>Genome sequences of Chlamydia trachomatis MoPn and Chlamydia pneumoniae AR39.</title>
        <authorList>
            <person name="Read T.D."/>
            <person name="Brunham R.C."/>
            <person name="Shen C."/>
            <person name="Gill S.R."/>
            <person name="Heidelberg J.F."/>
            <person name="White O."/>
            <person name="Hickey E.K."/>
            <person name="Peterson J.D."/>
            <person name="Utterback T.R."/>
            <person name="Berry K.J."/>
            <person name="Bass S."/>
            <person name="Linher K.D."/>
            <person name="Weidman J.F."/>
            <person name="Khouri H.M."/>
            <person name="Craven B."/>
            <person name="Bowman C."/>
            <person name="Dodson R.J."/>
            <person name="Gwinn M.L."/>
            <person name="Nelson W.C."/>
            <person name="DeBoy R.T."/>
            <person name="Kolonay J.F."/>
            <person name="McClarty G."/>
            <person name="Salzberg S.L."/>
            <person name="Eisen J.A."/>
            <person name="Fraser C.M."/>
        </authorList>
    </citation>
    <scope>NUCLEOTIDE SEQUENCE [LARGE SCALE GENOMIC DNA]</scope>
    <source>
        <strain>MoPn / Nigg</strain>
    </source>
</reference>
<sequence length="424" mass="45298">MFDVVISDIEAREILDSRGYPTLYVKVITNTGIFGEACVPSGASTGIKEALELRDQDPKRYQGKGVLQAVANVEKVLLPALQGFSVFDQITADAIMIDADGTSNKEKLGANAILGVSLALAKAAAATLERPLYRYLGGAFSHVLPCPMMNLINGGMHATNGLQFQEFMIRPISAPSLTEAVRMGAEVFHTLKKILQNRQLSTGVGDEGGFAPQLASNSEALDLLLAAIEKAGFIPGEDISLALDCAASSFYNTQDKTYDGKSAADQVAVLTELCDRYPIDSIEDGLAEEDFEGWKLLSETLGDRIQLVGDDLFVTNSALIAEGIAQGLANAVLIKPNQIGTLTETAEAIRLATTQGYATILSHRSGETEDTTIADLAVAFNTGQIKTGSLSRSERIAKYNRLIAIEEEIGPEAVFQDSNPFSKA</sequence>
<comment type="function">
    <text evidence="1">Catalyzes the reversible conversion of 2-phosphoglycerate (2-PG) into phosphoenolpyruvate (PEP). It is essential for the degradation of carbohydrates via glycolysis.</text>
</comment>
<comment type="catalytic activity">
    <reaction evidence="1">
        <text>(2R)-2-phosphoglycerate = phosphoenolpyruvate + H2O</text>
        <dbReference type="Rhea" id="RHEA:10164"/>
        <dbReference type="ChEBI" id="CHEBI:15377"/>
        <dbReference type="ChEBI" id="CHEBI:58289"/>
        <dbReference type="ChEBI" id="CHEBI:58702"/>
        <dbReference type="EC" id="4.2.1.11"/>
    </reaction>
</comment>
<comment type="cofactor">
    <cofactor evidence="1">
        <name>Mg(2+)</name>
        <dbReference type="ChEBI" id="CHEBI:18420"/>
    </cofactor>
    <text evidence="1">Binds a second Mg(2+) ion via substrate during catalysis.</text>
</comment>
<comment type="pathway">
    <text evidence="1">Carbohydrate degradation; glycolysis; pyruvate from D-glyceraldehyde 3-phosphate: step 4/5.</text>
</comment>
<comment type="subcellular location">
    <subcellularLocation>
        <location evidence="1">Cytoplasm</location>
    </subcellularLocation>
    <subcellularLocation>
        <location evidence="1">Secreted</location>
    </subcellularLocation>
    <subcellularLocation>
        <location evidence="1">Cell surface</location>
    </subcellularLocation>
    <text evidence="1">Fractions of enolase are present in both the cytoplasm and on the cell surface.</text>
</comment>
<comment type="similarity">
    <text evidence="1">Belongs to the enolase family.</text>
</comment>
<evidence type="ECO:0000255" key="1">
    <source>
        <dbReference type="HAMAP-Rule" id="MF_00318"/>
    </source>
</evidence>